<name>TCAL2_HUMAN</name>
<feature type="chain" id="PRO_0000239206" description="Transcription elongation factor A protein-like 2">
    <location>
        <begin position="1"/>
        <end position="227"/>
    </location>
</feature>
<feature type="region of interest" description="Disordered" evidence="1">
    <location>
        <begin position="1"/>
        <end position="145"/>
    </location>
</feature>
<feature type="region of interest" description="Disordered" evidence="1">
    <location>
        <begin position="202"/>
        <end position="227"/>
    </location>
</feature>
<feature type="compositionally biased region" description="Basic and acidic residues" evidence="1">
    <location>
        <begin position="18"/>
        <end position="43"/>
    </location>
</feature>
<feature type="compositionally biased region" description="Basic and acidic residues" evidence="1">
    <location>
        <begin position="50"/>
        <end position="82"/>
    </location>
</feature>
<feature type="compositionally biased region" description="Basic and acidic residues" evidence="1">
    <location>
        <begin position="90"/>
        <end position="113"/>
    </location>
</feature>
<feature type="compositionally biased region" description="Basic and acidic residues" evidence="1">
    <location>
        <begin position="120"/>
        <end position="136"/>
    </location>
</feature>
<feature type="compositionally biased region" description="Basic and acidic residues" evidence="1">
    <location>
        <begin position="206"/>
        <end position="227"/>
    </location>
</feature>
<feature type="sequence variant" id="VAR_034546" description="In dbSNP:rs34924423.">
    <original>D</original>
    <variation>G</variation>
    <location>
        <position position="19"/>
    </location>
</feature>
<feature type="sequence variant" id="VAR_034547" description="In dbSNP:rs5944856." evidence="2">
    <original>G</original>
    <variation>A</variation>
    <location>
        <position position="68"/>
    </location>
</feature>
<organism>
    <name type="scientific">Homo sapiens</name>
    <name type="common">Human</name>
    <dbReference type="NCBI Taxonomy" id="9606"/>
    <lineage>
        <taxon>Eukaryota</taxon>
        <taxon>Metazoa</taxon>
        <taxon>Chordata</taxon>
        <taxon>Craniata</taxon>
        <taxon>Vertebrata</taxon>
        <taxon>Euteleostomi</taxon>
        <taxon>Mammalia</taxon>
        <taxon>Eutheria</taxon>
        <taxon>Euarchontoglires</taxon>
        <taxon>Primates</taxon>
        <taxon>Haplorrhini</taxon>
        <taxon>Catarrhini</taxon>
        <taxon>Hominidae</taxon>
        <taxon>Homo</taxon>
    </lineage>
</organism>
<keyword id="KW-0539">Nucleus</keyword>
<keyword id="KW-1267">Proteomics identification</keyword>
<keyword id="KW-1185">Reference proteome</keyword>
<keyword id="KW-0804">Transcription</keyword>
<keyword id="KW-0805">Transcription regulation</keyword>
<evidence type="ECO:0000256" key="1">
    <source>
        <dbReference type="SAM" id="MobiDB-lite"/>
    </source>
</evidence>
<evidence type="ECO:0000269" key="2">
    <source>
    </source>
</evidence>
<evidence type="ECO:0000305" key="3"/>
<accession>Q9H3H9</accession>
<accession>B2R5C7</accession>
<proteinExistence type="evidence at protein level"/>
<protein>
    <recommendedName>
        <fullName>Transcription elongation factor A protein-like 2</fullName>
        <shortName>TCEA-like protein 2</shortName>
    </recommendedName>
    <alternativeName>
        <fullName>Transcription elongation factor S-II protein-like 2</fullName>
    </alternativeName>
</protein>
<dbReference type="EMBL" id="AF063606">
    <property type="protein sequence ID" value="AAG43164.1"/>
    <property type="molecule type" value="mRNA"/>
</dbReference>
<dbReference type="EMBL" id="AF325115">
    <property type="protein sequence ID" value="AAL37355.1"/>
    <property type="molecule type" value="mRNA"/>
</dbReference>
<dbReference type="EMBL" id="AK312138">
    <property type="protein sequence ID" value="BAG35074.1"/>
    <property type="molecule type" value="mRNA"/>
</dbReference>
<dbReference type="EMBL" id="AL035214">
    <property type="status" value="NOT_ANNOTATED_CDS"/>
    <property type="molecule type" value="Genomic_DNA"/>
</dbReference>
<dbReference type="EMBL" id="BC104764">
    <property type="protein sequence ID" value="AAI04765.1"/>
    <property type="molecule type" value="mRNA"/>
</dbReference>
<dbReference type="EMBL" id="BC093932">
    <property type="protein sequence ID" value="AAH93932.1"/>
    <property type="molecule type" value="mRNA"/>
</dbReference>
<dbReference type="CCDS" id="CCDS14496.1"/>
<dbReference type="RefSeq" id="NP_525129.1">
    <property type="nucleotide sequence ID" value="NM_080390.4"/>
</dbReference>
<dbReference type="RefSeq" id="XP_054189303.1">
    <property type="nucleotide sequence ID" value="XM_054333328.1"/>
</dbReference>
<dbReference type="SMR" id="Q9H3H9"/>
<dbReference type="BioGRID" id="126630">
    <property type="interactions" value="28"/>
</dbReference>
<dbReference type="FunCoup" id="Q9H3H9">
    <property type="interactions" value="131"/>
</dbReference>
<dbReference type="IntAct" id="Q9H3H9">
    <property type="interactions" value="22"/>
</dbReference>
<dbReference type="MINT" id="Q9H3H9"/>
<dbReference type="STRING" id="9606.ENSP00000361866"/>
<dbReference type="iPTMnet" id="Q9H3H9"/>
<dbReference type="PhosphoSitePlus" id="Q9H3H9"/>
<dbReference type="BioMuta" id="TCEAL2"/>
<dbReference type="DMDM" id="74752614"/>
<dbReference type="jPOST" id="Q9H3H9"/>
<dbReference type="MassIVE" id="Q9H3H9"/>
<dbReference type="PaxDb" id="9606-ENSP00000361866"/>
<dbReference type="PeptideAtlas" id="Q9H3H9"/>
<dbReference type="ProteomicsDB" id="80720"/>
<dbReference type="Antibodypedia" id="28844">
    <property type="antibodies" value="102 antibodies from 21 providers"/>
</dbReference>
<dbReference type="DNASU" id="140597"/>
<dbReference type="Ensembl" id="ENST00000329035.2">
    <property type="protein sequence ID" value="ENSP00000332359.2"/>
    <property type="gene ID" value="ENSG00000184905.9"/>
</dbReference>
<dbReference type="Ensembl" id="ENST00000372780.6">
    <property type="protein sequence ID" value="ENSP00000361866.1"/>
    <property type="gene ID" value="ENSG00000184905.9"/>
</dbReference>
<dbReference type="Ensembl" id="ENST00000708874.1">
    <property type="protein sequence ID" value="ENSP00000517392.1"/>
    <property type="gene ID" value="ENSG00000291823.1"/>
</dbReference>
<dbReference type="Ensembl" id="ENST00000708876.1">
    <property type="protein sequence ID" value="ENSP00000517393.1"/>
    <property type="gene ID" value="ENSG00000291823.1"/>
</dbReference>
<dbReference type="GeneID" id="140597"/>
<dbReference type="KEGG" id="hsa:140597"/>
<dbReference type="MANE-Select" id="ENST00000372780.6">
    <property type="protein sequence ID" value="ENSP00000361866.1"/>
    <property type="RefSeq nucleotide sequence ID" value="NM_080390.4"/>
    <property type="RefSeq protein sequence ID" value="NP_525129.1"/>
</dbReference>
<dbReference type="UCSC" id="uc004eip.4">
    <property type="organism name" value="human"/>
</dbReference>
<dbReference type="AGR" id="HGNC:29818"/>
<dbReference type="CTD" id="140597"/>
<dbReference type="DisGeNET" id="140597"/>
<dbReference type="GeneCards" id="TCEAL2"/>
<dbReference type="HGNC" id="HGNC:29818">
    <property type="gene designation" value="TCEAL2"/>
</dbReference>
<dbReference type="HPA" id="ENSG00000184905">
    <property type="expression patterns" value="Tissue enhanced (brain, pituitary gland)"/>
</dbReference>
<dbReference type="neXtProt" id="NX_Q9H3H9"/>
<dbReference type="OpenTargets" id="ENSG00000184905"/>
<dbReference type="PharmGKB" id="PA134922072"/>
<dbReference type="VEuPathDB" id="HostDB:ENSG00000184905"/>
<dbReference type="eggNOG" id="ENOG502SXKH">
    <property type="taxonomic scope" value="Eukaryota"/>
</dbReference>
<dbReference type="GeneTree" id="ENSGT00950000183164"/>
<dbReference type="HOGENOM" id="CLU_078412_1_0_1"/>
<dbReference type="InParanoid" id="Q9H3H9"/>
<dbReference type="OMA" id="MECKESH"/>
<dbReference type="OrthoDB" id="9834312at2759"/>
<dbReference type="PAN-GO" id="Q9H3H9">
    <property type="GO annotations" value="2 GO annotations based on evolutionary models"/>
</dbReference>
<dbReference type="PhylomeDB" id="Q9H3H9"/>
<dbReference type="TreeFam" id="TF336871"/>
<dbReference type="PathwayCommons" id="Q9H3H9"/>
<dbReference type="SignaLink" id="Q9H3H9"/>
<dbReference type="BioGRID-ORCS" id="140597">
    <property type="hits" value="11 hits in 768 CRISPR screens"/>
</dbReference>
<dbReference type="ChiTaRS" id="TCEAL2">
    <property type="organism name" value="human"/>
</dbReference>
<dbReference type="GenomeRNAi" id="140597"/>
<dbReference type="Pharos" id="Q9H3H9">
    <property type="development level" value="Tdark"/>
</dbReference>
<dbReference type="PRO" id="PR:Q9H3H9"/>
<dbReference type="Proteomes" id="UP000005640">
    <property type="component" value="Chromosome X"/>
</dbReference>
<dbReference type="RNAct" id="Q9H3H9">
    <property type="molecule type" value="protein"/>
</dbReference>
<dbReference type="Bgee" id="ENSG00000184905">
    <property type="expression patterns" value="Expressed in endothelial cell and 177 other cell types or tissues"/>
</dbReference>
<dbReference type="GO" id="GO:0005634">
    <property type="term" value="C:nucleus"/>
    <property type="evidence" value="ECO:0007669"/>
    <property type="project" value="UniProtKB-SubCell"/>
</dbReference>
<dbReference type="InterPro" id="IPR021156">
    <property type="entry name" value="TF_A-like/BEX"/>
</dbReference>
<dbReference type="Pfam" id="PF04538">
    <property type="entry name" value="BEX"/>
    <property type="match status" value="1"/>
</dbReference>
<comment type="function">
    <text>May be involved in transcriptional regulation.</text>
</comment>
<comment type="subcellular location">
    <subcellularLocation>
        <location evidence="3">Nucleus</location>
    </subcellularLocation>
</comment>
<comment type="similarity">
    <text evidence="3">Belongs to the TFS-II family. TFA subfamily.</text>
</comment>
<sequence length="227" mass="25850">MEKLFNENEGMPSNQGKIDNEEQPPHEGKPEVACILEDKKLENEGNTENTGKRVEEPLKDKEKPESAGKAKGEGKSERKGKSEMQGGSKTEGKPERGGRAEGEGEPDSEREPESEGEPESETRAAGKRPAEDDIPRKAKRKTNKGLAQYLKQYKEAIHDMNFSNEDMIREFDNMARVEDKRRKSKQKLGAFLWMQRNLQDPFYPRGPREFRGGCRAPRRDTEDIPYV</sequence>
<reference key="1">
    <citation type="submission" date="2000-11" db="EMBL/GenBank/DDBJ databases">
        <title>Isolation of full-length cDNA clones from human fetal brain cDNA library.</title>
        <authorList>
            <person name="Mao Y."/>
            <person name="Xie Y."/>
            <person name="Tang R."/>
            <person name="Zhou Z."/>
            <person name="Huang Y."/>
            <person name="Zhao W."/>
            <person name="Wang W."/>
        </authorList>
    </citation>
    <scope>NUCLEOTIDE SEQUENCE [LARGE SCALE MRNA]</scope>
    <source>
        <tissue>Fetal brain</tissue>
    </source>
</reference>
<reference key="2">
    <citation type="submission" date="2000-11" db="EMBL/GenBank/DDBJ databases">
        <title>Cloning and characterization of a novel human gene.</title>
        <authorList>
            <person name="Mao Y."/>
            <person name="Xie Y."/>
            <person name="Tang R."/>
            <person name="Zhou Z."/>
            <person name="Huang Y."/>
            <person name="Zhao W."/>
            <person name="Wang W."/>
        </authorList>
    </citation>
    <scope>NUCLEOTIDE SEQUENCE [MRNA]</scope>
    <source>
        <tissue>Brain</tissue>
    </source>
</reference>
<reference key="3">
    <citation type="journal article" date="2004" name="Nat. Genet.">
        <title>Complete sequencing and characterization of 21,243 full-length human cDNAs.</title>
        <authorList>
            <person name="Ota T."/>
            <person name="Suzuki Y."/>
            <person name="Nishikawa T."/>
            <person name="Otsuki T."/>
            <person name="Sugiyama T."/>
            <person name="Irie R."/>
            <person name="Wakamatsu A."/>
            <person name="Hayashi K."/>
            <person name="Sato H."/>
            <person name="Nagai K."/>
            <person name="Kimura K."/>
            <person name="Makita H."/>
            <person name="Sekine M."/>
            <person name="Obayashi M."/>
            <person name="Nishi T."/>
            <person name="Shibahara T."/>
            <person name="Tanaka T."/>
            <person name="Ishii S."/>
            <person name="Yamamoto J."/>
            <person name="Saito K."/>
            <person name="Kawai Y."/>
            <person name="Isono Y."/>
            <person name="Nakamura Y."/>
            <person name="Nagahari K."/>
            <person name="Murakami K."/>
            <person name="Yasuda T."/>
            <person name="Iwayanagi T."/>
            <person name="Wagatsuma M."/>
            <person name="Shiratori A."/>
            <person name="Sudo H."/>
            <person name="Hosoiri T."/>
            <person name="Kaku Y."/>
            <person name="Kodaira H."/>
            <person name="Kondo H."/>
            <person name="Sugawara M."/>
            <person name="Takahashi M."/>
            <person name="Kanda K."/>
            <person name="Yokoi T."/>
            <person name="Furuya T."/>
            <person name="Kikkawa E."/>
            <person name="Omura Y."/>
            <person name="Abe K."/>
            <person name="Kamihara K."/>
            <person name="Katsuta N."/>
            <person name="Sato K."/>
            <person name="Tanikawa M."/>
            <person name="Yamazaki M."/>
            <person name="Ninomiya K."/>
            <person name="Ishibashi T."/>
            <person name="Yamashita H."/>
            <person name="Murakawa K."/>
            <person name="Fujimori K."/>
            <person name="Tanai H."/>
            <person name="Kimata M."/>
            <person name="Watanabe M."/>
            <person name="Hiraoka S."/>
            <person name="Chiba Y."/>
            <person name="Ishida S."/>
            <person name="Ono Y."/>
            <person name="Takiguchi S."/>
            <person name="Watanabe S."/>
            <person name="Yosida M."/>
            <person name="Hotuta T."/>
            <person name="Kusano J."/>
            <person name="Kanehori K."/>
            <person name="Takahashi-Fujii A."/>
            <person name="Hara H."/>
            <person name="Tanase T.-O."/>
            <person name="Nomura Y."/>
            <person name="Togiya S."/>
            <person name="Komai F."/>
            <person name="Hara R."/>
            <person name="Takeuchi K."/>
            <person name="Arita M."/>
            <person name="Imose N."/>
            <person name="Musashino K."/>
            <person name="Yuuki H."/>
            <person name="Oshima A."/>
            <person name="Sasaki N."/>
            <person name="Aotsuka S."/>
            <person name="Yoshikawa Y."/>
            <person name="Matsunawa H."/>
            <person name="Ichihara T."/>
            <person name="Shiohata N."/>
            <person name="Sano S."/>
            <person name="Moriya S."/>
            <person name="Momiyama H."/>
            <person name="Satoh N."/>
            <person name="Takami S."/>
            <person name="Terashima Y."/>
            <person name="Suzuki O."/>
            <person name="Nakagawa S."/>
            <person name="Senoh A."/>
            <person name="Mizoguchi H."/>
            <person name="Goto Y."/>
            <person name="Shimizu F."/>
            <person name="Wakebe H."/>
            <person name="Hishigaki H."/>
            <person name="Watanabe T."/>
            <person name="Sugiyama A."/>
            <person name="Takemoto M."/>
            <person name="Kawakami B."/>
            <person name="Yamazaki M."/>
            <person name="Watanabe K."/>
            <person name="Kumagai A."/>
            <person name="Itakura S."/>
            <person name="Fukuzumi Y."/>
            <person name="Fujimori Y."/>
            <person name="Komiyama M."/>
            <person name="Tashiro H."/>
            <person name="Tanigami A."/>
            <person name="Fujiwara T."/>
            <person name="Ono T."/>
            <person name="Yamada K."/>
            <person name="Fujii Y."/>
            <person name="Ozaki K."/>
            <person name="Hirao M."/>
            <person name="Ohmori Y."/>
            <person name="Kawabata A."/>
            <person name="Hikiji T."/>
            <person name="Kobatake N."/>
            <person name="Inagaki H."/>
            <person name="Ikema Y."/>
            <person name="Okamoto S."/>
            <person name="Okitani R."/>
            <person name="Kawakami T."/>
            <person name="Noguchi S."/>
            <person name="Itoh T."/>
            <person name="Shigeta K."/>
            <person name="Senba T."/>
            <person name="Matsumura K."/>
            <person name="Nakajima Y."/>
            <person name="Mizuno T."/>
            <person name="Morinaga M."/>
            <person name="Sasaki M."/>
            <person name="Togashi T."/>
            <person name="Oyama M."/>
            <person name="Hata H."/>
            <person name="Watanabe M."/>
            <person name="Komatsu T."/>
            <person name="Mizushima-Sugano J."/>
            <person name="Satoh T."/>
            <person name="Shirai Y."/>
            <person name="Takahashi Y."/>
            <person name="Nakagawa K."/>
            <person name="Okumura K."/>
            <person name="Nagase T."/>
            <person name="Nomura N."/>
            <person name="Kikuchi H."/>
            <person name="Masuho Y."/>
            <person name="Yamashita R."/>
            <person name="Nakai K."/>
            <person name="Yada T."/>
            <person name="Nakamura Y."/>
            <person name="Ohara O."/>
            <person name="Isogai T."/>
            <person name="Sugano S."/>
        </authorList>
    </citation>
    <scope>NUCLEOTIDE SEQUENCE [LARGE SCALE MRNA]</scope>
    <scope>VARIANT ALA-68</scope>
    <source>
        <tissue>Cerebellum</tissue>
    </source>
</reference>
<reference key="4">
    <citation type="journal article" date="2005" name="Nature">
        <title>The DNA sequence of the human X chromosome.</title>
        <authorList>
            <person name="Ross M.T."/>
            <person name="Grafham D.V."/>
            <person name="Coffey A.J."/>
            <person name="Scherer S."/>
            <person name="McLay K."/>
            <person name="Muzny D."/>
            <person name="Platzer M."/>
            <person name="Howell G.R."/>
            <person name="Burrows C."/>
            <person name="Bird C.P."/>
            <person name="Frankish A."/>
            <person name="Lovell F.L."/>
            <person name="Howe K.L."/>
            <person name="Ashurst J.L."/>
            <person name="Fulton R.S."/>
            <person name="Sudbrak R."/>
            <person name="Wen G."/>
            <person name="Jones M.C."/>
            <person name="Hurles M.E."/>
            <person name="Andrews T.D."/>
            <person name="Scott C.E."/>
            <person name="Searle S."/>
            <person name="Ramser J."/>
            <person name="Whittaker A."/>
            <person name="Deadman R."/>
            <person name="Carter N.P."/>
            <person name="Hunt S.E."/>
            <person name="Chen R."/>
            <person name="Cree A."/>
            <person name="Gunaratne P."/>
            <person name="Havlak P."/>
            <person name="Hodgson A."/>
            <person name="Metzker M.L."/>
            <person name="Richards S."/>
            <person name="Scott G."/>
            <person name="Steffen D."/>
            <person name="Sodergren E."/>
            <person name="Wheeler D.A."/>
            <person name="Worley K.C."/>
            <person name="Ainscough R."/>
            <person name="Ambrose K.D."/>
            <person name="Ansari-Lari M.A."/>
            <person name="Aradhya S."/>
            <person name="Ashwell R.I."/>
            <person name="Babbage A.K."/>
            <person name="Bagguley C.L."/>
            <person name="Ballabio A."/>
            <person name="Banerjee R."/>
            <person name="Barker G.E."/>
            <person name="Barlow K.F."/>
            <person name="Barrett I.P."/>
            <person name="Bates K.N."/>
            <person name="Beare D.M."/>
            <person name="Beasley H."/>
            <person name="Beasley O."/>
            <person name="Beck A."/>
            <person name="Bethel G."/>
            <person name="Blechschmidt K."/>
            <person name="Brady N."/>
            <person name="Bray-Allen S."/>
            <person name="Bridgeman A.M."/>
            <person name="Brown A.J."/>
            <person name="Brown M.J."/>
            <person name="Bonnin D."/>
            <person name="Bruford E.A."/>
            <person name="Buhay C."/>
            <person name="Burch P."/>
            <person name="Burford D."/>
            <person name="Burgess J."/>
            <person name="Burrill W."/>
            <person name="Burton J."/>
            <person name="Bye J.M."/>
            <person name="Carder C."/>
            <person name="Carrel L."/>
            <person name="Chako J."/>
            <person name="Chapman J.C."/>
            <person name="Chavez D."/>
            <person name="Chen E."/>
            <person name="Chen G."/>
            <person name="Chen Y."/>
            <person name="Chen Z."/>
            <person name="Chinault C."/>
            <person name="Ciccodicola A."/>
            <person name="Clark S.Y."/>
            <person name="Clarke G."/>
            <person name="Clee C.M."/>
            <person name="Clegg S."/>
            <person name="Clerc-Blankenburg K."/>
            <person name="Clifford K."/>
            <person name="Cobley V."/>
            <person name="Cole C.G."/>
            <person name="Conquer J.S."/>
            <person name="Corby N."/>
            <person name="Connor R.E."/>
            <person name="David R."/>
            <person name="Davies J."/>
            <person name="Davis C."/>
            <person name="Davis J."/>
            <person name="Delgado O."/>
            <person name="Deshazo D."/>
            <person name="Dhami P."/>
            <person name="Ding Y."/>
            <person name="Dinh H."/>
            <person name="Dodsworth S."/>
            <person name="Draper H."/>
            <person name="Dugan-Rocha S."/>
            <person name="Dunham A."/>
            <person name="Dunn M."/>
            <person name="Durbin K.J."/>
            <person name="Dutta I."/>
            <person name="Eades T."/>
            <person name="Ellwood M."/>
            <person name="Emery-Cohen A."/>
            <person name="Errington H."/>
            <person name="Evans K.L."/>
            <person name="Faulkner L."/>
            <person name="Francis F."/>
            <person name="Frankland J."/>
            <person name="Fraser A.E."/>
            <person name="Galgoczy P."/>
            <person name="Gilbert J."/>
            <person name="Gill R."/>
            <person name="Gloeckner G."/>
            <person name="Gregory S.G."/>
            <person name="Gribble S."/>
            <person name="Griffiths C."/>
            <person name="Grocock R."/>
            <person name="Gu Y."/>
            <person name="Gwilliam R."/>
            <person name="Hamilton C."/>
            <person name="Hart E.A."/>
            <person name="Hawes A."/>
            <person name="Heath P.D."/>
            <person name="Heitmann K."/>
            <person name="Hennig S."/>
            <person name="Hernandez J."/>
            <person name="Hinzmann B."/>
            <person name="Ho S."/>
            <person name="Hoffs M."/>
            <person name="Howden P.J."/>
            <person name="Huckle E.J."/>
            <person name="Hume J."/>
            <person name="Hunt P.J."/>
            <person name="Hunt A.R."/>
            <person name="Isherwood J."/>
            <person name="Jacob L."/>
            <person name="Johnson D."/>
            <person name="Jones S."/>
            <person name="de Jong P.J."/>
            <person name="Joseph S.S."/>
            <person name="Keenan S."/>
            <person name="Kelly S."/>
            <person name="Kershaw J.K."/>
            <person name="Khan Z."/>
            <person name="Kioschis P."/>
            <person name="Klages S."/>
            <person name="Knights A.J."/>
            <person name="Kosiura A."/>
            <person name="Kovar-Smith C."/>
            <person name="Laird G.K."/>
            <person name="Langford C."/>
            <person name="Lawlor S."/>
            <person name="Leversha M."/>
            <person name="Lewis L."/>
            <person name="Liu W."/>
            <person name="Lloyd C."/>
            <person name="Lloyd D.M."/>
            <person name="Loulseged H."/>
            <person name="Loveland J.E."/>
            <person name="Lovell J.D."/>
            <person name="Lozado R."/>
            <person name="Lu J."/>
            <person name="Lyne R."/>
            <person name="Ma J."/>
            <person name="Maheshwari M."/>
            <person name="Matthews L.H."/>
            <person name="McDowall J."/>
            <person name="McLaren S."/>
            <person name="McMurray A."/>
            <person name="Meidl P."/>
            <person name="Meitinger T."/>
            <person name="Milne S."/>
            <person name="Miner G."/>
            <person name="Mistry S.L."/>
            <person name="Morgan M."/>
            <person name="Morris S."/>
            <person name="Mueller I."/>
            <person name="Mullikin J.C."/>
            <person name="Nguyen N."/>
            <person name="Nordsiek G."/>
            <person name="Nyakatura G."/>
            <person name="O'dell C.N."/>
            <person name="Okwuonu G."/>
            <person name="Palmer S."/>
            <person name="Pandian R."/>
            <person name="Parker D."/>
            <person name="Parrish J."/>
            <person name="Pasternak S."/>
            <person name="Patel D."/>
            <person name="Pearce A.V."/>
            <person name="Pearson D.M."/>
            <person name="Pelan S.E."/>
            <person name="Perez L."/>
            <person name="Porter K.M."/>
            <person name="Ramsey Y."/>
            <person name="Reichwald K."/>
            <person name="Rhodes S."/>
            <person name="Ridler K.A."/>
            <person name="Schlessinger D."/>
            <person name="Schueler M.G."/>
            <person name="Sehra H.K."/>
            <person name="Shaw-Smith C."/>
            <person name="Shen H."/>
            <person name="Sheridan E.M."/>
            <person name="Shownkeen R."/>
            <person name="Skuce C.D."/>
            <person name="Smith M.L."/>
            <person name="Sotheran E.C."/>
            <person name="Steingruber H.E."/>
            <person name="Steward C.A."/>
            <person name="Storey R."/>
            <person name="Swann R.M."/>
            <person name="Swarbreck D."/>
            <person name="Tabor P.E."/>
            <person name="Taudien S."/>
            <person name="Taylor T."/>
            <person name="Teague B."/>
            <person name="Thomas K."/>
            <person name="Thorpe A."/>
            <person name="Timms K."/>
            <person name="Tracey A."/>
            <person name="Trevanion S."/>
            <person name="Tromans A.C."/>
            <person name="d'Urso M."/>
            <person name="Verduzco D."/>
            <person name="Villasana D."/>
            <person name="Waldron L."/>
            <person name="Wall M."/>
            <person name="Wang Q."/>
            <person name="Warren J."/>
            <person name="Warry G.L."/>
            <person name="Wei X."/>
            <person name="West A."/>
            <person name="Whitehead S.L."/>
            <person name="Whiteley M.N."/>
            <person name="Wilkinson J.E."/>
            <person name="Willey D.L."/>
            <person name="Williams G."/>
            <person name="Williams L."/>
            <person name="Williamson A."/>
            <person name="Williamson H."/>
            <person name="Wilming L."/>
            <person name="Woodmansey R.L."/>
            <person name="Wray P.W."/>
            <person name="Yen J."/>
            <person name="Zhang J."/>
            <person name="Zhou J."/>
            <person name="Zoghbi H."/>
            <person name="Zorilla S."/>
            <person name="Buck D."/>
            <person name="Reinhardt R."/>
            <person name="Poustka A."/>
            <person name="Rosenthal A."/>
            <person name="Lehrach H."/>
            <person name="Meindl A."/>
            <person name="Minx P.J."/>
            <person name="Hillier L.W."/>
            <person name="Willard H.F."/>
            <person name="Wilson R.K."/>
            <person name="Waterston R.H."/>
            <person name="Rice C.M."/>
            <person name="Vaudin M."/>
            <person name="Coulson A."/>
            <person name="Nelson D.L."/>
            <person name="Weinstock G."/>
            <person name="Sulston J.E."/>
            <person name="Durbin R.M."/>
            <person name="Hubbard T."/>
            <person name="Gibbs R.A."/>
            <person name="Beck S."/>
            <person name="Rogers J."/>
            <person name="Bentley D.R."/>
        </authorList>
    </citation>
    <scope>NUCLEOTIDE SEQUENCE [LARGE SCALE GENOMIC DNA]</scope>
</reference>
<reference key="5">
    <citation type="journal article" date="2004" name="Genome Res.">
        <title>The status, quality, and expansion of the NIH full-length cDNA project: the Mammalian Gene Collection (MGC).</title>
        <authorList>
            <consortium name="The MGC Project Team"/>
        </authorList>
    </citation>
    <scope>NUCLEOTIDE SEQUENCE [LARGE SCALE MRNA]</scope>
    <source>
        <tissue>Brain</tissue>
    </source>
</reference>
<gene>
    <name type="primary">TCEAL2</name>
    <name type="ORF">My048</name>
    <name type="ORF">MY0876G0</name>
</gene>